<keyword id="KW-0067">ATP-binding</keyword>
<keyword id="KW-0963">Cytoplasm</keyword>
<keyword id="KW-0206">Cytoskeleton</keyword>
<keyword id="KW-0378">Hydrolase</keyword>
<keyword id="KW-0547">Nucleotide-binding</keyword>
<comment type="function">
    <text>Actins are highly conserved proteins that are involved in various types of cell motility and are ubiquitously expressed in all eukaryotic cells.</text>
</comment>
<comment type="catalytic activity">
    <reaction evidence="1">
        <text>ATP + H2O = ADP + phosphate + H(+)</text>
        <dbReference type="Rhea" id="RHEA:13065"/>
        <dbReference type="ChEBI" id="CHEBI:15377"/>
        <dbReference type="ChEBI" id="CHEBI:15378"/>
        <dbReference type="ChEBI" id="CHEBI:30616"/>
        <dbReference type="ChEBI" id="CHEBI:43474"/>
        <dbReference type="ChEBI" id="CHEBI:456216"/>
    </reaction>
</comment>
<comment type="subcellular location">
    <subcellularLocation>
        <location>Cytoplasm</location>
        <location>Cytoskeleton</location>
    </subcellularLocation>
</comment>
<comment type="similarity">
    <text evidence="2">Belongs to the actin family.</text>
</comment>
<organism>
    <name type="scientific">Puccinia graminis</name>
    <name type="common">Black stem rust fungus</name>
    <dbReference type="NCBI Taxonomy" id="5297"/>
    <lineage>
        <taxon>Eukaryota</taxon>
        <taxon>Fungi</taxon>
        <taxon>Dikarya</taxon>
        <taxon>Basidiomycota</taxon>
        <taxon>Pucciniomycotina</taxon>
        <taxon>Pucciniomycetes</taxon>
        <taxon>Pucciniales</taxon>
        <taxon>Pucciniaceae</taxon>
        <taxon>Puccinia</taxon>
    </lineage>
</organism>
<sequence length="375" mass="41745">MEEEVAALVLDNGSGMCKAGFAGDDAPRAVFPSICGGPRHQGVMVGMGQKDSYVGDEAQSKRGILTLKYPIEHGIVTNWDDMEKIWHHTFYNELRVAPEEHPVLLTEAPLNPKVNREKMTQIMFETFNAPAFYVAIQAVLSLYASGRTTGIVLDSGDGVTHTVPIYEGYALPHAILRLDLAGRDLTDYLIKILMERGYSFTTTAEREIRRDIKEKLCYVGLDFEQEMQTASQSSALEKSYELPDGQVITIGNERFRCPEALFQPSLLGLEASGIHETTYNSIMKCDLDIRKDLYGNVVMSGGTTMYSGISDRMQKEITALAPSSMKVKIVAPPERKYSVWIGGSILASLSTFQQMWISKQEYDESGPSIVHRKCF</sequence>
<protein>
    <recommendedName>
        <fullName>Actin</fullName>
        <ecNumber evidence="1">3.6.4.-</ecNumber>
    </recommendedName>
</protein>
<feature type="chain" id="PRO_0000089000" description="Actin">
    <location>
        <begin position="1"/>
        <end position="375"/>
    </location>
</feature>
<reference key="1">
    <citation type="submission" date="1994-02" db="EMBL/GenBank/DDBJ databases">
        <authorList>
            <person name="Gross P."/>
            <person name="Tiburzy R."/>
        </authorList>
    </citation>
    <scope>NUCLEOTIDE SEQUENCE [GENOMIC DNA]</scope>
    <source>
        <strain>Sp. tritici race 32</strain>
    </source>
</reference>
<dbReference type="EC" id="3.6.4.-" evidence="1"/>
<dbReference type="EMBL" id="X77857">
    <property type="protein sequence ID" value="CAA54848.1"/>
    <property type="molecule type" value="Genomic_DNA"/>
</dbReference>
<dbReference type="PIR" id="S42103">
    <property type="entry name" value="S42103"/>
</dbReference>
<dbReference type="SMR" id="P50138"/>
<dbReference type="VEuPathDB" id="FungiDB:PGTG_05488"/>
<dbReference type="GO" id="GO:0005737">
    <property type="term" value="C:cytoplasm"/>
    <property type="evidence" value="ECO:0007669"/>
    <property type="project" value="UniProtKB-KW"/>
</dbReference>
<dbReference type="GO" id="GO:0005856">
    <property type="term" value="C:cytoskeleton"/>
    <property type="evidence" value="ECO:0007669"/>
    <property type="project" value="UniProtKB-SubCell"/>
</dbReference>
<dbReference type="GO" id="GO:0005524">
    <property type="term" value="F:ATP binding"/>
    <property type="evidence" value="ECO:0007669"/>
    <property type="project" value="UniProtKB-KW"/>
</dbReference>
<dbReference type="GO" id="GO:0016787">
    <property type="term" value="F:hydrolase activity"/>
    <property type="evidence" value="ECO:0007669"/>
    <property type="project" value="UniProtKB-KW"/>
</dbReference>
<dbReference type="CDD" id="cd10224">
    <property type="entry name" value="ASKHA_NBD_actin"/>
    <property type="match status" value="1"/>
</dbReference>
<dbReference type="FunFam" id="2.30.36.70:FF:000001">
    <property type="entry name" value="Actin, alpha skeletal muscle"/>
    <property type="match status" value="1"/>
</dbReference>
<dbReference type="FunFam" id="3.30.420.40:FF:000131">
    <property type="entry name" value="Actin, alpha skeletal muscle"/>
    <property type="match status" value="1"/>
</dbReference>
<dbReference type="FunFam" id="3.30.420.40:FF:000291">
    <property type="entry name" value="Actin, alpha skeletal muscle"/>
    <property type="match status" value="1"/>
</dbReference>
<dbReference type="FunFam" id="3.90.640.10:FF:000001">
    <property type="entry name" value="Actin, muscle"/>
    <property type="match status" value="1"/>
</dbReference>
<dbReference type="FunFam" id="3.30.420.40:FF:000058">
    <property type="entry name" value="Putative actin-related protein 5"/>
    <property type="match status" value="1"/>
</dbReference>
<dbReference type="Gene3D" id="3.30.420.40">
    <property type="match status" value="2"/>
</dbReference>
<dbReference type="Gene3D" id="3.90.640.10">
    <property type="entry name" value="Actin, Chain A, domain 4"/>
    <property type="match status" value="1"/>
</dbReference>
<dbReference type="InterPro" id="IPR004000">
    <property type="entry name" value="Actin"/>
</dbReference>
<dbReference type="InterPro" id="IPR020902">
    <property type="entry name" value="Actin/actin-like_CS"/>
</dbReference>
<dbReference type="InterPro" id="IPR004001">
    <property type="entry name" value="Actin_CS"/>
</dbReference>
<dbReference type="InterPro" id="IPR043129">
    <property type="entry name" value="ATPase_NBD"/>
</dbReference>
<dbReference type="PANTHER" id="PTHR11937">
    <property type="entry name" value="ACTIN"/>
    <property type="match status" value="1"/>
</dbReference>
<dbReference type="Pfam" id="PF00022">
    <property type="entry name" value="Actin"/>
    <property type="match status" value="1"/>
</dbReference>
<dbReference type="PRINTS" id="PR00190">
    <property type="entry name" value="ACTIN"/>
</dbReference>
<dbReference type="SMART" id="SM00268">
    <property type="entry name" value="ACTIN"/>
    <property type="match status" value="1"/>
</dbReference>
<dbReference type="SUPFAM" id="SSF53067">
    <property type="entry name" value="Actin-like ATPase domain"/>
    <property type="match status" value="2"/>
</dbReference>
<dbReference type="PROSITE" id="PS00406">
    <property type="entry name" value="ACTINS_1"/>
    <property type="match status" value="1"/>
</dbReference>
<dbReference type="PROSITE" id="PS00432">
    <property type="entry name" value="ACTINS_2"/>
    <property type="match status" value="1"/>
</dbReference>
<dbReference type="PROSITE" id="PS01132">
    <property type="entry name" value="ACTINS_ACT_LIKE"/>
    <property type="match status" value="1"/>
</dbReference>
<evidence type="ECO:0000250" key="1">
    <source>
        <dbReference type="UniProtKB" id="P60010"/>
    </source>
</evidence>
<evidence type="ECO:0000305" key="2"/>
<proteinExistence type="inferred from homology"/>
<name>ACT_PUCGR</name>
<accession>P50138</accession>